<feature type="chain" id="PRO_0000238816" description="Cytochrome c-type biogenesis protein CcmE">
    <location>
        <begin position="1"/>
        <end position="143"/>
    </location>
</feature>
<feature type="topological domain" description="Cytoplasmic" evidence="1">
    <location>
        <begin position="1"/>
        <end position="8"/>
    </location>
</feature>
<feature type="transmembrane region" description="Helical; Signal-anchor for type II membrane protein" evidence="1">
    <location>
        <begin position="9"/>
        <end position="29"/>
    </location>
</feature>
<feature type="topological domain" description="Periplasmic" evidence="1">
    <location>
        <begin position="30"/>
        <end position="143"/>
    </location>
</feature>
<feature type="binding site" description="covalent" evidence="1">
    <location>
        <position position="124"/>
    </location>
    <ligand>
        <name>heme</name>
        <dbReference type="ChEBI" id="CHEBI:30413"/>
    </ligand>
</feature>
<feature type="binding site" description="axial binding residue" evidence="1">
    <location>
        <position position="128"/>
    </location>
    <ligand>
        <name>heme</name>
        <dbReference type="ChEBI" id="CHEBI:30413"/>
    </ligand>
    <ligandPart>
        <name>Fe</name>
        <dbReference type="ChEBI" id="CHEBI:18248"/>
    </ligandPart>
</feature>
<proteinExistence type="inferred from homology"/>
<protein>
    <recommendedName>
        <fullName evidence="1">Cytochrome c-type biogenesis protein CcmE</fullName>
    </recommendedName>
    <alternativeName>
        <fullName evidence="1">Cytochrome c maturation protein E</fullName>
    </alternativeName>
    <alternativeName>
        <fullName evidence="1">Heme chaperone CcmE</fullName>
    </alternativeName>
</protein>
<keyword id="KW-0997">Cell inner membrane</keyword>
<keyword id="KW-1003">Cell membrane</keyword>
<keyword id="KW-0201">Cytochrome c-type biogenesis</keyword>
<keyword id="KW-0349">Heme</keyword>
<keyword id="KW-0408">Iron</keyword>
<keyword id="KW-0472">Membrane</keyword>
<keyword id="KW-0479">Metal-binding</keyword>
<keyword id="KW-0735">Signal-anchor</keyword>
<keyword id="KW-0812">Transmembrane</keyword>
<keyword id="KW-1133">Transmembrane helix</keyword>
<comment type="function">
    <text evidence="1">Heme chaperone required for the biogenesis of c-type cytochromes. Transiently binds heme delivered by CcmC and transfers the heme to apo-cytochromes in a process facilitated by CcmF and CcmH.</text>
</comment>
<comment type="subcellular location">
    <subcellularLocation>
        <location evidence="1">Cell inner membrane</location>
        <topology evidence="1">Single-pass type II membrane protein</topology>
        <orientation evidence="1">Periplasmic side</orientation>
    </subcellularLocation>
</comment>
<comment type="similarity">
    <text evidence="1">Belongs to the CcmE/CycJ family.</text>
</comment>
<dbReference type="EMBL" id="AF386079">
    <property type="protein sequence ID" value="AAM00396.1"/>
    <property type="molecule type" value="Genomic_DNA"/>
</dbReference>
<dbReference type="RefSeq" id="WP_027224040.1">
    <property type="nucleotide sequence ID" value="NZ_UGOS01000001.1"/>
</dbReference>
<dbReference type="SMR" id="Q8RPN9"/>
<dbReference type="STRING" id="91892.BIZ52_04595"/>
<dbReference type="eggNOG" id="COG2332">
    <property type="taxonomic scope" value="Bacteria"/>
</dbReference>
<dbReference type="GO" id="GO:0005886">
    <property type="term" value="C:plasma membrane"/>
    <property type="evidence" value="ECO:0007669"/>
    <property type="project" value="UniProtKB-SubCell"/>
</dbReference>
<dbReference type="GO" id="GO:0020037">
    <property type="term" value="F:heme binding"/>
    <property type="evidence" value="ECO:0007669"/>
    <property type="project" value="InterPro"/>
</dbReference>
<dbReference type="GO" id="GO:0046872">
    <property type="term" value="F:metal ion binding"/>
    <property type="evidence" value="ECO:0007669"/>
    <property type="project" value="UniProtKB-KW"/>
</dbReference>
<dbReference type="GO" id="GO:0017004">
    <property type="term" value="P:cytochrome complex assembly"/>
    <property type="evidence" value="ECO:0007669"/>
    <property type="project" value="UniProtKB-KW"/>
</dbReference>
<dbReference type="FunFam" id="2.40.50.140:FF:000104">
    <property type="entry name" value="Cytochrome c-type biogenesis protein CcmE"/>
    <property type="match status" value="1"/>
</dbReference>
<dbReference type="Gene3D" id="2.40.50.140">
    <property type="entry name" value="Nucleic acid-binding proteins"/>
    <property type="match status" value="1"/>
</dbReference>
<dbReference type="HAMAP" id="MF_01959">
    <property type="entry name" value="CcmE"/>
    <property type="match status" value="1"/>
</dbReference>
<dbReference type="InterPro" id="IPR004329">
    <property type="entry name" value="CcmE"/>
</dbReference>
<dbReference type="InterPro" id="IPR036127">
    <property type="entry name" value="CcmE-like_sf"/>
</dbReference>
<dbReference type="InterPro" id="IPR012340">
    <property type="entry name" value="NA-bd_OB-fold"/>
</dbReference>
<dbReference type="NCBIfam" id="NF009727">
    <property type="entry name" value="PRK13254.1-1"/>
    <property type="match status" value="1"/>
</dbReference>
<dbReference type="NCBIfam" id="NF009729">
    <property type="entry name" value="PRK13254.1-3"/>
    <property type="match status" value="1"/>
</dbReference>
<dbReference type="NCBIfam" id="NF009731">
    <property type="entry name" value="PRK13254.1-5"/>
    <property type="match status" value="1"/>
</dbReference>
<dbReference type="PANTHER" id="PTHR34128">
    <property type="entry name" value="CYTOCHROME C-TYPE BIOGENESIS PROTEIN CCME HOMOLOG, MITOCHONDRIAL"/>
    <property type="match status" value="1"/>
</dbReference>
<dbReference type="PANTHER" id="PTHR34128:SF2">
    <property type="entry name" value="CYTOCHROME C-TYPE BIOGENESIS PROTEIN CCME HOMOLOG, MITOCHONDRIAL"/>
    <property type="match status" value="1"/>
</dbReference>
<dbReference type="Pfam" id="PF03100">
    <property type="entry name" value="CcmE"/>
    <property type="match status" value="1"/>
</dbReference>
<dbReference type="SUPFAM" id="SSF82093">
    <property type="entry name" value="Heme chaperone CcmE"/>
    <property type="match status" value="1"/>
</dbReference>
<reference key="1">
    <citation type="journal article" date="2002" name="Infect. Immun.">
        <title>The cytochrome c maturation locus of Legionella pneumophila promotes iron assimilation and intracellular infection and contains a strain-specific insertion sequence element.</title>
        <authorList>
            <person name="Viswanathan V.K."/>
            <person name="Kurtz S."/>
            <person name="Pedersen L.L."/>
            <person name="Abu Kwaik Y."/>
            <person name="Krcmarik K."/>
            <person name="Mody S."/>
            <person name="Cianciotto N.P."/>
        </authorList>
    </citation>
    <scope>NUCLEOTIDE SEQUENCE [GENOMIC DNA]</scope>
    <source>
        <strain>130b / Wadsworth / Serogroup 1</strain>
    </source>
</reference>
<name>CCME_LEGPN</name>
<accession>Q8RPN9</accession>
<sequence length="143" mass="15777">MTPVRRRKLFILLFALSVLSAAAALVLYALRQNISLFYTPTQIVAGEAPAKHHIRVGGMVEANSIVRAKKGLDVQFKITDFENTIVVTYSGILPDLFREGQGIVAEGEVTDNHHFHAIQVLAKHDANYMPPQVKSALADKVKQ</sequence>
<organism>
    <name type="scientific">Legionella pneumophila</name>
    <dbReference type="NCBI Taxonomy" id="446"/>
    <lineage>
        <taxon>Bacteria</taxon>
        <taxon>Pseudomonadati</taxon>
        <taxon>Pseudomonadota</taxon>
        <taxon>Gammaproteobacteria</taxon>
        <taxon>Legionellales</taxon>
        <taxon>Legionellaceae</taxon>
        <taxon>Legionella</taxon>
    </lineage>
</organism>
<gene>
    <name evidence="1" type="primary">ccmE</name>
    <name evidence="1" type="synonym">cycJ</name>
</gene>
<evidence type="ECO:0000255" key="1">
    <source>
        <dbReference type="HAMAP-Rule" id="MF_01959"/>
    </source>
</evidence>